<dbReference type="EMBL" id="CP000412">
    <property type="protein sequence ID" value="ABJ58848.1"/>
    <property type="molecule type" value="Genomic_DNA"/>
</dbReference>
<dbReference type="RefSeq" id="WP_003618434.1">
    <property type="nucleotide sequence ID" value="NC_008529.1"/>
</dbReference>
<dbReference type="SMR" id="Q049M4"/>
<dbReference type="KEGG" id="lbu:LBUL_1326"/>
<dbReference type="HOGENOM" id="CLU_061463_3_2_9"/>
<dbReference type="BioCyc" id="LDEL321956:LBUL_RS06255-MONOMER"/>
<dbReference type="GO" id="GO:0005737">
    <property type="term" value="C:cytoplasm"/>
    <property type="evidence" value="ECO:0007669"/>
    <property type="project" value="UniProtKB-ARBA"/>
</dbReference>
<dbReference type="GO" id="GO:1990904">
    <property type="term" value="C:ribonucleoprotein complex"/>
    <property type="evidence" value="ECO:0007669"/>
    <property type="project" value="UniProtKB-KW"/>
</dbReference>
<dbReference type="GO" id="GO:0005840">
    <property type="term" value="C:ribosome"/>
    <property type="evidence" value="ECO:0007669"/>
    <property type="project" value="UniProtKB-KW"/>
</dbReference>
<dbReference type="GO" id="GO:0019843">
    <property type="term" value="F:rRNA binding"/>
    <property type="evidence" value="ECO:0007669"/>
    <property type="project" value="UniProtKB-UniRule"/>
</dbReference>
<dbReference type="GO" id="GO:0003735">
    <property type="term" value="F:structural constituent of ribosome"/>
    <property type="evidence" value="ECO:0007669"/>
    <property type="project" value="InterPro"/>
</dbReference>
<dbReference type="GO" id="GO:0006412">
    <property type="term" value="P:translation"/>
    <property type="evidence" value="ECO:0007669"/>
    <property type="project" value="UniProtKB-UniRule"/>
</dbReference>
<dbReference type="HAMAP" id="MF_01363">
    <property type="entry name" value="Ribosomal_bL21"/>
    <property type="match status" value="1"/>
</dbReference>
<dbReference type="InterPro" id="IPR028909">
    <property type="entry name" value="bL21-like"/>
</dbReference>
<dbReference type="InterPro" id="IPR036164">
    <property type="entry name" value="bL21-like_sf"/>
</dbReference>
<dbReference type="InterPro" id="IPR001787">
    <property type="entry name" value="Ribosomal_bL21"/>
</dbReference>
<dbReference type="InterPro" id="IPR018258">
    <property type="entry name" value="Ribosomal_bL21_CS"/>
</dbReference>
<dbReference type="NCBIfam" id="TIGR00061">
    <property type="entry name" value="L21"/>
    <property type="match status" value="1"/>
</dbReference>
<dbReference type="PANTHER" id="PTHR21349">
    <property type="entry name" value="50S RIBOSOMAL PROTEIN L21"/>
    <property type="match status" value="1"/>
</dbReference>
<dbReference type="PANTHER" id="PTHR21349:SF0">
    <property type="entry name" value="LARGE RIBOSOMAL SUBUNIT PROTEIN BL21M"/>
    <property type="match status" value="1"/>
</dbReference>
<dbReference type="Pfam" id="PF00829">
    <property type="entry name" value="Ribosomal_L21p"/>
    <property type="match status" value="1"/>
</dbReference>
<dbReference type="SUPFAM" id="SSF141091">
    <property type="entry name" value="L21p-like"/>
    <property type="match status" value="1"/>
</dbReference>
<dbReference type="PROSITE" id="PS01169">
    <property type="entry name" value="RIBOSOMAL_L21"/>
    <property type="match status" value="1"/>
</dbReference>
<sequence length="103" mass="11336">MYAVIKTGGKQYKVAEGESIFVEKLDVQAGEEVVFDQVILVANGDDVKVGTPLVEGAKVVASVDKQGKEKKVVTFKYKPKKHSHSKYGHRQPYTKVTVKSIEA</sequence>
<protein>
    <recommendedName>
        <fullName evidence="1">Large ribosomal subunit protein bL21</fullName>
    </recommendedName>
    <alternativeName>
        <fullName evidence="2">50S ribosomal protein L21</fullName>
    </alternativeName>
</protein>
<gene>
    <name evidence="1" type="primary">rplU</name>
    <name type="ordered locus">LBUL_1326</name>
</gene>
<organism>
    <name type="scientific">Lactobacillus delbrueckii subsp. bulgaricus (strain ATCC BAA-365 / Lb-18)</name>
    <dbReference type="NCBI Taxonomy" id="321956"/>
    <lineage>
        <taxon>Bacteria</taxon>
        <taxon>Bacillati</taxon>
        <taxon>Bacillota</taxon>
        <taxon>Bacilli</taxon>
        <taxon>Lactobacillales</taxon>
        <taxon>Lactobacillaceae</taxon>
        <taxon>Lactobacillus</taxon>
    </lineage>
</organism>
<comment type="function">
    <text evidence="1">This protein binds to 23S rRNA in the presence of protein L20.</text>
</comment>
<comment type="subunit">
    <text evidence="1">Part of the 50S ribosomal subunit. Contacts protein L20.</text>
</comment>
<comment type="similarity">
    <text evidence="1">Belongs to the bacterial ribosomal protein bL21 family.</text>
</comment>
<feature type="chain" id="PRO_1000067845" description="Large ribosomal subunit protein bL21">
    <location>
        <begin position="1"/>
        <end position="103"/>
    </location>
</feature>
<evidence type="ECO:0000255" key="1">
    <source>
        <dbReference type="HAMAP-Rule" id="MF_01363"/>
    </source>
</evidence>
<evidence type="ECO:0000305" key="2"/>
<accession>Q049M4</accession>
<keyword id="KW-0687">Ribonucleoprotein</keyword>
<keyword id="KW-0689">Ribosomal protein</keyword>
<keyword id="KW-0694">RNA-binding</keyword>
<keyword id="KW-0699">rRNA-binding</keyword>
<reference key="1">
    <citation type="journal article" date="2006" name="Proc. Natl. Acad. Sci. U.S.A.">
        <title>Comparative genomics of the lactic acid bacteria.</title>
        <authorList>
            <person name="Makarova K.S."/>
            <person name="Slesarev A."/>
            <person name="Wolf Y.I."/>
            <person name="Sorokin A."/>
            <person name="Mirkin B."/>
            <person name="Koonin E.V."/>
            <person name="Pavlov A."/>
            <person name="Pavlova N."/>
            <person name="Karamychev V."/>
            <person name="Polouchine N."/>
            <person name="Shakhova V."/>
            <person name="Grigoriev I."/>
            <person name="Lou Y."/>
            <person name="Rohksar D."/>
            <person name="Lucas S."/>
            <person name="Huang K."/>
            <person name="Goodstein D.M."/>
            <person name="Hawkins T."/>
            <person name="Plengvidhya V."/>
            <person name="Welker D."/>
            <person name="Hughes J."/>
            <person name="Goh Y."/>
            <person name="Benson A."/>
            <person name="Baldwin K."/>
            <person name="Lee J.-H."/>
            <person name="Diaz-Muniz I."/>
            <person name="Dosti B."/>
            <person name="Smeianov V."/>
            <person name="Wechter W."/>
            <person name="Barabote R."/>
            <person name="Lorca G."/>
            <person name="Altermann E."/>
            <person name="Barrangou R."/>
            <person name="Ganesan B."/>
            <person name="Xie Y."/>
            <person name="Rawsthorne H."/>
            <person name="Tamir D."/>
            <person name="Parker C."/>
            <person name="Breidt F."/>
            <person name="Broadbent J.R."/>
            <person name="Hutkins R."/>
            <person name="O'Sullivan D."/>
            <person name="Steele J."/>
            <person name="Unlu G."/>
            <person name="Saier M.H. Jr."/>
            <person name="Klaenhammer T."/>
            <person name="Richardson P."/>
            <person name="Kozyavkin S."/>
            <person name="Weimer B.C."/>
            <person name="Mills D.A."/>
        </authorList>
    </citation>
    <scope>NUCLEOTIDE SEQUENCE [LARGE SCALE GENOMIC DNA]</scope>
    <source>
        <strain>ATCC BAA-365 / Lb-18</strain>
    </source>
</reference>
<proteinExistence type="inferred from homology"/>
<name>RL21_LACDB</name>